<keyword id="KW-0067">ATP-binding</keyword>
<keyword id="KW-0436">Ligase</keyword>
<keyword id="KW-0460">Magnesium</keyword>
<keyword id="KW-0479">Metal-binding</keyword>
<keyword id="KW-0547">Nucleotide-binding</keyword>
<keyword id="KW-1185">Reference proteome</keyword>
<keyword id="KW-0816">Tricarboxylic acid cycle</keyword>
<protein>
    <recommendedName>
        <fullName evidence="1">Succinate--CoA ligase [ADP-forming] subunit beta</fullName>
        <ecNumber evidence="1">6.2.1.5</ecNumber>
    </recommendedName>
    <alternativeName>
        <fullName evidence="1">Succinyl-CoA synthetase subunit beta</fullName>
        <shortName evidence="1">SCS-beta</shortName>
    </alternativeName>
</protein>
<dbReference type="EC" id="6.2.1.5" evidence="1"/>
<dbReference type="EMBL" id="CP000029">
    <property type="protein sequence ID" value="AAW54159.1"/>
    <property type="molecule type" value="Genomic_DNA"/>
</dbReference>
<dbReference type="RefSeq" id="WP_002439496.1">
    <property type="nucleotide sequence ID" value="NC_002976.3"/>
</dbReference>
<dbReference type="SMR" id="Q5HPU5"/>
<dbReference type="STRING" id="176279.SERP0813"/>
<dbReference type="GeneID" id="50018941"/>
<dbReference type="KEGG" id="ser:SERP0813"/>
<dbReference type="eggNOG" id="COG0045">
    <property type="taxonomic scope" value="Bacteria"/>
</dbReference>
<dbReference type="HOGENOM" id="CLU_037430_0_2_9"/>
<dbReference type="UniPathway" id="UPA00223">
    <property type="reaction ID" value="UER00999"/>
</dbReference>
<dbReference type="Proteomes" id="UP000000531">
    <property type="component" value="Chromosome"/>
</dbReference>
<dbReference type="GO" id="GO:0005829">
    <property type="term" value="C:cytosol"/>
    <property type="evidence" value="ECO:0007669"/>
    <property type="project" value="TreeGrafter"/>
</dbReference>
<dbReference type="GO" id="GO:0042709">
    <property type="term" value="C:succinate-CoA ligase complex"/>
    <property type="evidence" value="ECO:0007669"/>
    <property type="project" value="TreeGrafter"/>
</dbReference>
<dbReference type="GO" id="GO:0005524">
    <property type="term" value="F:ATP binding"/>
    <property type="evidence" value="ECO:0007669"/>
    <property type="project" value="UniProtKB-UniRule"/>
</dbReference>
<dbReference type="GO" id="GO:0000287">
    <property type="term" value="F:magnesium ion binding"/>
    <property type="evidence" value="ECO:0007669"/>
    <property type="project" value="UniProtKB-UniRule"/>
</dbReference>
<dbReference type="GO" id="GO:0004775">
    <property type="term" value="F:succinate-CoA ligase (ADP-forming) activity"/>
    <property type="evidence" value="ECO:0007669"/>
    <property type="project" value="UniProtKB-UniRule"/>
</dbReference>
<dbReference type="GO" id="GO:0004776">
    <property type="term" value="F:succinate-CoA ligase (GDP-forming) activity"/>
    <property type="evidence" value="ECO:0007669"/>
    <property type="project" value="RHEA"/>
</dbReference>
<dbReference type="GO" id="GO:0006104">
    <property type="term" value="P:succinyl-CoA metabolic process"/>
    <property type="evidence" value="ECO:0007669"/>
    <property type="project" value="TreeGrafter"/>
</dbReference>
<dbReference type="GO" id="GO:0006099">
    <property type="term" value="P:tricarboxylic acid cycle"/>
    <property type="evidence" value="ECO:0007669"/>
    <property type="project" value="UniProtKB-UniRule"/>
</dbReference>
<dbReference type="FunFam" id="3.30.1490.20:FF:000002">
    <property type="entry name" value="Succinate--CoA ligase [ADP-forming] subunit beta"/>
    <property type="match status" value="1"/>
</dbReference>
<dbReference type="FunFam" id="3.30.470.20:FF:000002">
    <property type="entry name" value="Succinate--CoA ligase [ADP-forming] subunit beta"/>
    <property type="match status" value="1"/>
</dbReference>
<dbReference type="FunFam" id="3.40.50.261:FF:000001">
    <property type="entry name" value="Succinate--CoA ligase [ADP-forming] subunit beta"/>
    <property type="match status" value="1"/>
</dbReference>
<dbReference type="Gene3D" id="3.30.1490.20">
    <property type="entry name" value="ATP-grasp fold, A domain"/>
    <property type="match status" value="1"/>
</dbReference>
<dbReference type="Gene3D" id="3.30.470.20">
    <property type="entry name" value="ATP-grasp fold, B domain"/>
    <property type="match status" value="1"/>
</dbReference>
<dbReference type="Gene3D" id="3.40.50.261">
    <property type="entry name" value="Succinyl-CoA synthetase domains"/>
    <property type="match status" value="1"/>
</dbReference>
<dbReference type="HAMAP" id="MF_00558">
    <property type="entry name" value="Succ_CoA_beta"/>
    <property type="match status" value="1"/>
</dbReference>
<dbReference type="InterPro" id="IPR011761">
    <property type="entry name" value="ATP-grasp"/>
</dbReference>
<dbReference type="InterPro" id="IPR013650">
    <property type="entry name" value="ATP-grasp_succ-CoA_synth-type"/>
</dbReference>
<dbReference type="InterPro" id="IPR013815">
    <property type="entry name" value="ATP_grasp_subdomain_1"/>
</dbReference>
<dbReference type="InterPro" id="IPR017866">
    <property type="entry name" value="Succ-CoA_synthase_bsu_CS"/>
</dbReference>
<dbReference type="InterPro" id="IPR005811">
    <property type="entry name" value="SUCC_ACL_C"/>
</dbReference>
<dbReference type="InterPro" id="IPR005809">
    <property type="entry name" value="Succ_CoA_ligase-like_bsu"/>
</dbReference>
<dbReference type="InterPro" id="IPR016102">
    <property type="entry name" value="Succinyl-CoA_synth-like"/>
</dbReference>
<dbReference type="NCBIfam" id="NF001913">
    <property type="entry name" value="PRK00696.1"/>
    <property type="match status" value="1"/>
</dbReference>
<dbReference type="NCBIfam" id="TIGR01016">
    <property type="entry name" value="sucCoAbeta"/>
    <property type="match status" value="1"/>
</dbReference>
<dbReference type="PANTHER" id="PTHR11815:SF10">
    <property type="entry name" value="SUCCINATE--COA LIGASE [GDP-FORMING] SUBUNIT BETA, MITOCHONDRIAL"/>
    <property type="match status" value="1"/>
</dbReference>
<dbReference type="PANTHER" id="PTHR11815">
    <property type="entry name" value="SUCCINYL-COA SYNTHETASE BETA CHAIN"/>
    <property type="match status" value="1"/>
</dbReference>
<dbReference type="Pfam" id="PF08442">
    <property type="entry name" value="ATP-grasp_2"/>
    <property type="match status" value="1"/>
</dbReference>
<dbReference type="Pfam" id="PF00549">
    <property type="entry name" value="Ligase_CoA"/>
    <property type="match status" value="1"/>
</dbReference>
<dbReference type="PIRSF" id="PIRSF001554">
    <property type="entry name" value="SucCS_beta"/>
    <property type="match status" value="1"/>
</dbReference>
<dbReference type="SUPFAM" id="SSF56059">
    <property type="entry name" value="Glutathione synthetase ATP-binding domain-like"/>
    <property type="match status" value="1"/>
</dbReference>
<dbReference type="SUPFAM" id="SSF52210">
    <property type="entry name" value="Succinyl-CoA synthetase domains"/>
    <property type="match status" value="1"/>
</dbReference>
<dbReference type="PROSITE" id="PS50975">
    <property type="entry name" value="ATP_GRASP"/>
    <property type="match status" value="1"/>
</dbReference>
<dbReference type="PROSITE" id="PS01217">
    <property type="entry name" value="SUCCINYL_COA_LIG_3"/>
    <property type="match status" value="1"/>
</dbReference>
<name>SUCC_STAEQ</name>
<gene>
    <name evidence="1" type="primary">sucC</name>
    <name type="ordered locus">SERP0813</name>
</gene>
<proteinExistence type="inferred from homology"/>
<feature type="chain" id="PRO_0000102866" description="Succinate--CoA ligase [ADP-forming] subunit beta">
    <location>
        <begin position="1"/>
        <end position="388"/>
    </location>
</feature>
<feature type="domain" description="ATP-grasp" evidence="1">
    <location>
        <begin position="9"/>
        <end position="244"/>
    </location>
</feature>
<feature type="binding site" evidence="1">
    <location>
        <position position="46"/>
    </location>
    <ligand>
        <name>ATP</name>
        <dbReference type="ChEBI" id="CHEBI:30616"/>
    </ligand>
</feature>
<feature type="binding site" evidence="1">
    <location>
        <begin position="53"/>
        <end position="55"/>
    </location>
    <ligand>
        <name>ATP</name>
        <dbReference type="ChEBI" id="CHEBI:30616"/>
    </ligand>
</feature>
<feature type="binding site" evidence="1">
    <location>
        <position position="99"/>
    </location>
    <ligand>
        <name>ATP</name>
        <dbReference type="ChEBI" id="CHEBI:30616"/>
    </ligand>
</feature>
<feature type="binding site" evidence="1">
    <location>
        <position position="102"/>
    </location>
    <ligand>
        <name>ATP</name>
        <dbReference type="ChEBI" id="CHEBI:30616"/>
    </ligand>
</feature>
<feature type="binding site" evidence="1">
    <location>
        <position position="107"/>
    </location>
    <ligand>
        <name>ATP</name>
        <dbReference type="ChEBI" id="CHEBI:30616"/>
    </ligand>
</feature>
<feature type="binding site" evidence="1">
    <location>
        <position position="199"/>
    </location>
    <ligand>
        <name>Mg(2+)</name>
        <dbReference type="ChEBI" id="CHEBI:18420"/>
    </ligand>
</feature>
<feature type="binding site" evidence="1">
    <location>
        <position position="213"/>
    </location>
    <ligand>
        <name>Mg(2+)</name>
        <dbReference type="ChEBI" id="CHEBI:18420"/>
    </ligand>
</feature>
<feature type="binding site" evidence="1">
    <location>
        <position position="264"/>
    </location>
    <ligand>
        <name>substrate</name>
        <note>ligand shared with subunit alpha</note>
    </ligand>
</feature>
<feature type="binding site" evidence="1">
    <location>
        <begin position="321"/>
        <end position="323"/>
    </location>
    <ligand>
        <name>substrate</name>
        <note>ligand shared with subunit alpha</note>
    </ligand>
</feature>
<sequence length="388" mass="42025">MNIHEYQGKEIFRSMGVAVPEGRVAFTAEEAVEKAKELNSDVYVVKAQIHAGGRGKAGGVKIAKSLSEVETYANELLGKQLVTHQTGPEGKEVKRLYIEEGCDIQKEYYVGFVIDRATDKVTLMASEEGGTEIEEVAAQTPEKIFKETIDPVVGLSPYQARRIAFNINIPKESVGKATKFLLALYNVFIEKDCSIVEINPLVTTGDGQVLALDAKLNFDDNALFRHKDILELRDLEEEDPKEIEASKYDLSYIALDGDIGCMVNGAGLAMATMDTINHFGGNPANFLDVGGGATKEKVTEAFKIILGDDNVKGIFVNIFGGIMKCDVIAEGIVAAVKEVELTLPLVVRLEGTNVERGKAILNESGLAIEPAATMAEGAQKIVKLVKEA</sequence>
<accession>Q5HPU5</accession>
<reference key="1">
    <citation type="journal article" date="2005" name="J. Bacteriol.">
        <title>Insights on evolution of virulence and resistance from the complete genome analysis of an early methicillin-resistant Staphylococcus aureus strain and a biofilm-producing methicillin-resistant Staphylococcus epidermidis strain.</title>
        <authorList>
            <person name="Gill S.R."/>
            <person name="Fouts D.E."/>
            <person name="Archer G.L."/>
            <person name="Mongodin E.F."/>
            <person name="DeBoy R.T."/>
            <person name="Ravel J."/>
            <person name="Paulsen I.T."/>
            <person name="Kolonay J.F."/>
            <person name="Brinkac L.M."/>
            <person name="Beanan M.J."/>
            <person name="Dodson R.J."/>
            <person name="Daugherty S.C."/>
            <person name="Madupu R."/>
            <person name="Angiuoli S.V."/>
            <person name="Durkin A.S."/>
            <person name="Haft D.H."/>
            <person name="Vamathevan J.J."/>
            <person name="Khouri H."/>
            <person name="Utterback T.R."/>
            <person name="Lee C."/>
            <person name="Dimitrov G."/>
            <person name="Jiang L."/>
            <person name="Qin H."/>
            <person name="Weidman J."/>
            <person name="Tran K."/>
            <person name="Kang K.H."/>
            <person name="Hance I.R."/>
            <person name="Nelson K.E."/>
            <person name="Fraser C.M."/>
        </authorList>
    </citation>
    <scope>NUCLEOTIDE SEQUENCE [LARGE SCALE GENOMIC DNA]</scope>
    <source>
        <strain>ATCC 35984 / DSM 28319 / BCRC 17069 / CCUG 31568 / BM 3577 / RP62A</strain>
    </source>
</reference>
<evidence type="ECO:0000255" key="1">
    <source>
        <dbReference type="HAMAP-Rule" id="MF_00558"/>
    </source>
</evidence>
<organism>
    <name type="scientific">Staphylococcus epidermidis (strain ATCC 35984 / DSM 28319 / BCRC 17069 / CCUG 31568 / BM 3577 / RP62A)</name>
    <dbReference type="NCBI Taxonomy" id="176279"/>
    <lineage>
        <taxon>Bacteria</taxon>
        <taxon>Bacillati</taxon>
        <taxon>Bacillota</taxon>
        <taxon>Bacilli</taxon>
        <taxon>Bacillales</taxon>
        <taxon>Staphylococcaceae</taxon>
        <taxon>Staphylococcus</taxon>
    </lineage>
</organism>
<comment type="function">
    <text evidence="1">Succinyl-CoA synthetase functions in the citric acid cycle (TCA), coupling the hydrolysis of succinyl-CoA to the synthesis of either ATP or GTP and thus represents the only step of substrate-level phosphorylation in the TCA. The beta subunit provides nucleotide specificity of the enzyme and binds the substrate succinate, while the binding sites for coenzyme A and phosphate are found in the alpha subunit.</text>
</comment>
<comment type="catalytic activity">
    <reaction evidence="1">
        <text>succinate + ATP + CoA = succinyl-CoA + ADP + phosphate</text>
        <dbReference type="Rhea" id="RHEA:17661"/>
        <dbReference type="ChEBI" id="CHEBI:30031"/>
        <dbReference type="ChEBI" id="CHEBI:30616"/>
        <dbReference type="ChEBI" id="CHEBI:43474"/>
        <dbReference type="ChEBI" id="CHEBI:57287"/>
        <dbReference type="ChEBI" id="CHEBI:57292"/>
        <dbReference type="ChEBI" id="CHEBI:456216"/>
        <dbReference type="EC" id="6.2.1.5"/>
    </reaction>
    <physiologicalReaction direction="right-to-left" evidence="1">
        <dbReference type="Rhea" id="RHEA:17663"/>
    </physiologicalReaction>
</comment>
<comment type="catalytic activity">
    <reaction evidence="1">
        <text>GTP + succinate + CoA = succinyl-CoA + GDP + phosphate</text>
        <dbReference type="Rhea" id="RHEA:22120"/>
        <dbReference type="ChEBI" id="CHEBI:30031"/>
        <dbReference type="ChEBI" id="CHEBI:37565"/>
        <dbReference type="ChEBI" id="CHEBI:43474"/>
        <dbReference type="ChEBI" id="CHEBI:57287"/>
        <dbReference type="ChEBI" id="CHEBI:57292"/>
        <dbReference type="ChEBI" id="CHEBI:58189"/>
    </reaction>
    <physiologicalReaction direction="right-to-left" evidence="1">
        <dbReference type="Rhea" id="RHEA:22122"/>
    </physiologicalReaction>
</comment>
<comment type="cofactor">
    <cofactor evidence="1">
        <name>Mg(2+)</name>
        <dbReference type="ChEBI" id="CHEBI:18420"/>
    </cofactor>
    <text evidence="1">Binds 1 Mg(2+) ion per subunit.</text>
</comment>
<comment type="pathway">
    <text evidence="1">Carbohydrate metabolism; tricarboxylic acid cycle; succinate from succinyl-CoA (ligase route): step 1/1.</text>
</comment>
<comment type="subunit">
    <text evidence="1">Heterotetramer of two alpha and two beta subunits.</text>
</comment>
<comment type="similarity">
    <text evidence="1">Belongs to the succinate/malate CoA ligase beta subunit family.</text>
</comment>